<feature type="chain" id="PRO_0000435452" description="D-psicose 3-epimerase">
    <location>
        <begin position="1"/>
        <end position="293"/>
    </location>
</feature>
<feature type="active site" description="Proton donor/acceptor" evidence="2">
    <location>
        <position position="150"/>
    </location>
</feature>
<feature type="active site" description="Proton donor/acceptor" evidence="2">
    <location>
        <position position="244"/>
    </location>
</feature>
<feature type="binding site" evidence="4">
    <location>
        <position position="6"/>
    </location>
    <ligand>
        <name>substrate</name>
    </ligand>
</feature>
<feature type="binding site" evidence="1">
    <location>
        <position position="107"/>
    </location>
    <ligand>
        <name>substrate</name>
    </ligand>
</feature>
<feature type="binding site" evidence="4">
    <location>
        <position position="150"/>
    </location>
    <ligand>
        <name>Mn(2+)</name>
        <dbReference type="ChEBI" id="CHEBI:29035"/>
    </ligand>
</feature>
<feature type="binding site" evidence="4">
    <location>
        <position position="156"/>
    </location>
    <ligand>
        <name>substrate</name>
    </ligand>
</feature>
<feature type="binding site" evidence="4">
    <location>
        <begin position="183"/>
        <end position="186"/>
    </location>
    <ligand>
        <name>substrate</name>
    </ligand>
</feature>
<feature type="binding site" evidence="4">
    <location>
        <position position="183"/>
    </location>
    <ligand>
        <name>Mn(2+)</name>
        <dbReference type="ChEBI" id="CHEBI:29035"/>
    </ligand>
</feature>
<feature type="binding site" evidence="4">
    <location>
        <position position="209"/>
    </location>
    <ligand>
        <name>Mn(2+)</name>
        <dbReference type="ChEBI" id="CHEBI:29035"/>
    </ligand>
</feature>
<feature type="binding site" evidence="4">
    <location>
        <position position="215"/>
    </location>
    <ligand>
        <name>substrate</name>
    </ligand>
</feature>
<feature type="binding site" evidence="4">
    <location>
        <position position="244"/>
    </location>
    <ligand>
        <name>Mn(2+)</name>
        <dbReference type="ChEBI" id="CHEBI:29035"/>
    </ligand>
</feature>
<feature type="strand" evidence="7">
    <location>
        <begin position="3"/>
        <end position="6"/>
    </location>
</feature>
<feature type="helix" evidence="7">
    <location>
        <begin position="7"/>
        <end position="10"/>
    </location>
</feature>
<feature type="strand" evidence="7">
    <location>
        <begin position="12"/>
        <end position="14"/>
    </location>
</feature>
<feature type="helix" evidence="7">
    <location>
        <begin position="18"/>
        <end position="28"/>
    </location>
</feature>
<feature type="strand" evidence="7">
    <location>
        <begin position="31"/>
        <end position="37"/>
    </location>
</feature>
<feature type="helix" evidence="7">
    <location>
        <begin position="40"/>
        <end position="42"/>
    </location>
</feature>
<feature type="helix" evidence="7">
    <location>
        <begin position="45"/>
        <end position="57"/>
    </location>
</feature>
<feature type="strand" evidence="7">
    <location>
        <begin position="61"/>
        <end position="66"/>
    </location>
</feature>
<feature type="helix" evidence="7">
    <location>
        <begin position="70"/>
        <end position="72"/>
    </location>
</feature>
<feature type="helix" evidence="7">
    <location>
        <begin position="79"/>
        <end position="99"/>
    </location>
</feature>
<feature type="strand" evidence="7">
    <location>
        <begin position="103"/>
        <end position="107"/>
    </location>
</feature>
<feature type="helix" evidence="7">
    <location>
        <begin position="122"/>
        <end position="142"/>
    </location>
</feature>
<feature type="strand" evidence="7">
    <location>
        <begin position="146"/>
        <end position="150"/>
    </location>
</feature>
<feature type="turn" evidence="7">
    <location>
        <begin position="154"/>
        <end position="156"/>
    </location>
</feature>
<feature type="helix" evidence="7">
    <location>
        <begin position="163"/>
        <end position="173"/>
    </location>
</feature>
<feature type="strand" evidence="7">
    <location>
        <begin position="178"/>
        <end position="183"/>
    </location>
</feature>
<feature type="helix" evidence="7">
    <location>
        <begin position="184"/>
        <end position="190"/>
    </location>
</feature>
<feature type="helix" evidence="7">
    <location>
        <begin position="194"/>
        <end position="201"/>
    </location>
</feature>
<feature type="helix" evidence="7">
    <location>
        <begin position="202"/>
        <end position="204"/>
    </location>
</feature>
<feature type="strand" evidence="7">
    <location>
        <begin position="205"/>
        <end position="210"/>
    </location>
</feature>
<feature type="strand" evidence="7">
    <location>
        <begin position="220"/>
        <end position="222"/>
    </location>
</feature>
<feature type="helix" evidence="7">
    <location>
        <begin position="225"/>
        <end position="234"/>
    </location>
</feature>
<feature type="strand" evidence="7">
    <location>
        <begin position="241"/>
        <end position="243"/>
    </location>
</feature>
<feature type="helix" evidence="7">
    <location>
        <begin position="251"/>
        <end position="257"/>
    </location>
</feature>
<feature type="turn" evidence="8">
    <location>
        <begin position="263"/>
        <end position="266"/>
    </location>
</feature>
<feature type="helix" evidence="7">
    <location>
        <begin position="269"/>
        <end position="287"/>
    </location>
</feature>
<name>DPES_RUMCH</name>
<keyword id="KW-0002">3D-structure</keyword>
<keyword id="KW-0170">Cobalt</keyword>
<keyword id="KW-0413">Isomerase</keyword>
<keyword id="KW-0464">Manganese</keyword>
<keyword id="KW-0479">Metal-binding</keyword>
<keyword id="KW-1185">Reference proteome</keyword>
<gene>
    <name type="ordered locus">Ccel_0941</name>
</gene>
<organism>
    <name type="scientific">Ruminiclostridium cellulolyticum (strain ATCC 35319 / DSM 5812 / JCM 6584 / H10)</name>
    <name type="common">Clostridium cellulolyticum</name>
    <dbReference type="NCBI Taxonomy" id="394503"/>
    <lineage>
        <taxon>Bacteria</taxon>
        <taxon>Bacillati</taxon>
        <taxon>Bacillota</taxon>
        <taxon>Clostridia</taxon>
        <taxon>Eubacteriales</taxon>
        <taxon>Oscillospiraceae</taxon>
        <taxon>Ruminiclostridium</taxon>
    </lineage>
</organism>
<accession>B8I944</accession>
<proteinExistence type="evidence at protein level"/>
<sequence length="293" mass="33034">MKHGIYYAYWEQEWEADYKYYIEKVAKLGFDILEIAASPLPFYSDIQINELKACAHGNGITLTVGHGPSAEQNLSSPDPDIRKNAKAFYTDLLKRLYKLDVHLIGGALYSYWPIDYTKTIDKKGDWERSVESVREVAKVAEACGVDFCLEVLNRFENYLINTAQEGVDFVKQVDHNNVKVMLDTFHMNIEEDSIGGAIRTAGSYLGHLHTGECNRKVPGRGRIPWVEIGEALADIGYNGSVVMEPFVRMGGTVGSNIKVWRDISNGADEKMLDREAQAALDFSRYVLECHKHS</sequence>
<comment type="function">
    <text evidence="3">Involved in the biosynthesis of D-psicose. Catalyzes the reversible epimerization of D-fructose at the C3 position to yield D-psicose. The enzyme is highly specific for D-psicose and shows very low activity with D-tagatose.</text>
</comment>
<comment type="catalytic activity">
    <reaction evidence="3">
        <text>D-allulose = keto-D-fructose</text>
        <dbReference type="Rhea" id="RHEA:42360"/>
        <dbReference type="ChEBI" id="CHEBI:27605"/>
        <dbReference type="ChEBI" id="CHEBI:48095"/>
        <dbReference type="EC" id="5.1.3.30"/>
    </reaction>
</comment>
<comment type="cofactor">
    <cofactor evidence="3 4">
        <name>Mn(2+)</name>
        <dbReference type="ChEBI" id="CHEBI:29035"/>
    </cofactor>
    <cofactor evidence="3">
        <name>Co(2+)</name>
        <dbReference type="ChEBI" id="CHEBI:48828"/>
    </cofactor>
    <text evidence="3 4">Binds 1 Mn(2+) or Co(2+) ion per subunit. Can also use Mg(2+), Fe(2+) and Ni(2+) ions to a lesser extent.</text>
</comment>
<comment type="biophysicochemical properties">
    <kinetics>
        <KM evidence="3">17.4 mM for D-psicose (at pH 8 and 55 degrees Celsius)</KM>
        <KM evidence="3">244 mM for D-tagatose (at pH 8 and 55 degrees Celsius)</KM>
        <text evidence="3">kcat is 3243.4 min(-1) for epimerase activity with D-psicose as substrate (at pH 8 and 55 degrees Celsius). kcat is 184.8 min(-1) for epimerase activity with D-tagatose as substrate (at pH 8 and 55 degrees Celsius).</text>
    </kinetics>
    <phDependence>
        <text evidence="3">Optimum pH is 8.</text>
    </phDependence>
    <temperatureDependence>
        <text evidence="3">Optimum temperature is 55 degrees Celsius.</text>
    </temperatureDependence>
</comment>
<comment type="subunit">
    <text evidence="3 4">Homotetramer.</text>
</comment>
<comment type="similarity">
    <text evidence="6">Belongs to the hyi family.</text>
</comment>
<reference key="1">
    <citation type="submission" date="2009-01" db="EMBL/GenBank/DDBJ databases">
        <title>Complete sequence of Clostridium cellulolyticum H10.</title>
        <authorList>
            <consortium name="US DOE Joint Genome Institute"/>
            <person name="Lucas S."/>
            <person name="Copeland A."/>
            <person name="Lapidus A."/>
            <person name="Glavina del Rio T."/>
            <person name="Dalin E."/>
            <person name="Tice H."/>
            <person name="Bruce D."/>
            <person name="Goodwin L."/>
            <person name="Pitluck S."/>
            <person name="Chertkov O."/>
            <person name="Saunders E."/>
            <person name="Brettin T."/>
            <person name="Detter J.C."/>
            <person name="Han C."/>
            <person name="Larimer F."/>
            <person name="Land M."/>
            <person name="Hauser L."/>
            <person name="Kyrpides N."/>
            <person name="Ivanova N."/>
            <person name="Zhou J."/>
            <person name="Richardson P."/>
        </authorList>
    </citation>
    <scope>NUCLEOTIDE SEQUENCE [LARGE SCALE GENOMIC DNA]</scope>
    <source>
        <strain>ATCC 35319 / DSM 5812 / JCM 6584 / H10</strain>
    </source>
</reference>
<reference key="2">
    <citation type="journal article" date="2011" name="J. Agric. Food Chem.">
        <title>Cloning, expression, and characterization of a D-psicose 3-epimerase from Clostridium cellulolyticum H10.</title>
        <authorList>
            <person name="Mu W."/>
            <person name="Chu F."/>
            <person name="Xing Q."/>
            <person name="Yu S."/>
            <person name="Zhou L."/>
            <person name="Jiang B."/>
        </authorList>
    </citation>
    <scope>FUNCTION</scope>
    <scope>CATALYTIC ACTIVITY</scope>
    <scope>BIOPHYSICOCHEMICAL PROPERTIES</scope>
    <scope>SUBSTRATE SPECIFICITY</scope>
    <scope>COFACTOR</scope>
    <scope>SUBUNIT</scope>
    <source>
        <strain>ATCC 35319 / DSM 5812 / JCM 6584 / H10</strain>
    </source>
</reference>
<reference key="3">
    <citation type="journal article" date="2012" name="Protein Cell">
        <title>Crystal structures of D-psicose 3-epimerase from Clostridium cellulolyticum H10 and its complex with ketohexose sugars.</title>
        <authorList>
            <person name="Chan H.C."/>
            <person name="Zhu Y."/>
            <person name="Hu Y."/>
            <person name="Ko T.P."/>
            <person name="Huang C.H."/>
            <person name="Ren F."/>
            <person name="Chen C.C."/>
            <person name="Ma Y."/>
            <person name="Guo R.T."/>
            <person name="Sun Y."/>
        </authorList>
    </citation>
    <scope>X-RAY CRYSTALLOGRAPHY (1.98 ANGSTROMS) IN COMPLEX WITH SUBSTRATE; SUBSTRATE ANALOGS AND MANGANESE ION</scope>
    <scope>COFACTOR</scope>
    <scope>SUBUNIT</scope>
    <source>
        <strain>ATCC 35319 / DSM 5812 / JCM 6584 / H10</strain>
    </source>
</reference>
<protein>
    <recommendedName>
        <fullName evidence="5">D-psicose 3-epimerase</fullName>
        <shortName evidence="5">DPEase</shortName>
        <ecNumber evidence="3">5.1.3.30</ecNumber>
    </recommendedName>
</protein>
<dbReference type="EC" id="5.1.3.30" evidence="3"/>
<dbReference type="EMBL" id="CP001348">
    <property type="protein sequence ID" value="ACL75304.1"/>
    <property type="molecule type" value="Genomic_DNA"/>
</dbReference>
<dbReference type="RefSeq" id="WP_015924461.1">
    <property type="nucleotide sequence ID" value="NC_011898.1"/>
</dbReference>
<dbReference type="PDB" id="3VNI">
    <property type="method" value="X-ray"/>
    <property type="resolution" value="1.98 A"/>
    <property type="chains" value="A/B/C/D=1-293"/>
</dbReference>
<dbReference type="PDB" id="3VNJ">
    <property type="method" value="X-ray"/>
    <property type="resolution" value="2.08 A"/>
    <property type="chains" value="A/B/C/D=1-293"/>
</dbReference>
<dbReference type="PDB" id="3VNK">
    <property type="method" value="X-ray"/>
    <property type="resolution" value="2.02 A"/>
    <property type="chains" value="A/B/C/D=1-293"/>
</dbReference>
<dbReference type="PDB" id="3VNL">
    <property type="method" value="X-ray"/>
    <property type="resolution" value="2.15 A"/>
    <property type="chains" value="A/B/C/D=1-293"/>
</dbReference>
<dbReference type="PDB" id="3VNM">
    <property type="method" value="X-ray"/>
    <property type="resolution" value="2.12 A"/>
    <property type="chains" value="A/B/C/D=1-293"/>
</dbReference>
<dbReference type="PDB" id="7E9W">
    <property type="method" value="X-ray"/>
    <property type="resolution" value="2.10 A"/>
    <property type="chains" value="A/B/C/D=1-293"/>
</dbReference>
<dbReference type="PDBsum" id="3VNI"/>
<dbReference type="PDBsum" id="3VNJ"/>
<dbReference type="PDBsum" id="3VNK"/>
<dbReference type="PDBsum" id="3VNL"/>
<dbReference type="PDBsum" id="3VNM"/>
<dbReference type="PDBsum" id="7E9W"/>
<dbReference type="SMR" id="B8I944"/>
<dbReference type="STRING" id="394503.Ccel_0941"/>
<dbReference type="KEGG" id="cce:Ccel_0941"/>
<dbReference type="eggNOG" id="COG1082">
    <property type="taxonomic scope" value="Bacteria"/>
</dbReference>
<dbReference type="HOGENOM" id="CLU_050006_8_2_9"/>
<dbReference type="OrthoDB" id="9786584at2"/>
<dbReference type="BRENDA" id="5.1.3.30">
    <property type="organism ID" value="1468"/>
</dbReference>
<dbReference type="EvolutionaryTrace" id="B8I944"/>
<dbReference type="Proteomes" id="UP000001349">
    <property type="component" value="Chromosome"/>
</dbReference>
<dbReference type="GO" id="GO:0050897">
    <property type="term" value="F:cobalt ion binding"/>
    <property type="evidence" value="ECO:0000314"/>
    <property type="project" value="UniProtKB"/>
</dbReference>
<dbReference type="GO" id="GO:0030145">
    <property type="term" value="F:manganese ion binding"/>
    <property type="evidence" value="ECO:0000314"/>
    <property type="project" value="UniProtKB"/>
</dbReference>
<dbReference type="GO" id="GO:0016857">
    <property type="term" value="F:racemase and epimerase activity, acting on carbohydrates and derivatives"/>
    <property type="evidence" value="ECO:0000314"/>
    <property type="project" value="UniProtKB"/>
</dbReference>
<dbReference type="FunFam" id="3.20.20.150:FF:000022">
    <property type="entry name" value="D-psicose 3-epimerase"/>
    <property type="match status" value="1"/>
</dbReference>
<dbReference type="Gene3D" id="3.20.20.150">
    <property type="entry name" value="Divalent-metal-dependent TIM barrel enzymes"/>
    <property type="match status" value="1"/>
</dbReference>
<dbReference type="InterPro" id="IPR050312">
    <property type="entry name" value="IolE/XylAMocC-like"/>
</dbReference>
<dbReference type="InterPro" id="IPR036237">
    <property type="entry name" value="Xyl_isomerase-like_sf"/>
</dbReference>
<dbReference type="InterPro" id="IPR013022">
    <property type="entry name" value="Xyl_isomerase-like_TIM-brl"/>
</dbReference>
<dbReference type="PANTHER" id="PTHR12110">
    <property type="entry name" value="HYDROXYPYRUVATE ISOMERASE"/>
    <property type="match status" value="1"/>
</dbReference>
<dbReference type="PANTHER" id="PTHR12110:SF41">
    <property type="entry name" value="INOSOSE DEHYDRATASE"/>
    <property type="match status" value="1"/>
</dbReference>
<dbReference type="Pfam" id="PF01261">
    <property type="entry name" value="AP_endonuc_2"/>
    <property type="match status" value="1"/>
</dbReference>
<dbReference type="SUPFAM" id="SSF51658">
    <property type="entry name" value="Xylose isomerase-like"/>
    <property type="match status" value="1"/>
</dbReference>
<evidence type="ECO:0000250" key="1">
    <source>
        <dbReference type="UniProtKB" id="A9CH28"/>
    </source>
</evidence>
<evidence type="ECO:0000250" key="2">
    <source>
        <dbReference type="UniProtKB" id="Q9WYP7"/>
    </source>
</evidence>
<evidence type="ECO:0000269" key="3">
    <source>
    </source>
</evidence>
<evidence type="ECO:0000269" key="4">
    <source>
    </source>
</evidence>
<evidence type="ECO:0000303" key="5">
    <source>
    </source>
</evidence>
<evidence type="ECO:0000305" key="6"/>
<evidence type="ECO:0007829" key="7">
    <source>
        <dbReference type="PDB" id="3VNI"/>
    </source>
</evidence>
<evidence type="ECO:0007829" key="8">
    <source>
        <dbReference type="PDB" id="3VNK"/>
    </source>
</evidence>